<reference key="1">
    <citation type="journal article" date="2003" name="Lancet">
        <title>Genome sequence of Vibrio parahaemolyticus: a pathogenic mechanism distinct from that of V. cholerae.</title>
        <authorList>
            <person name="Makino K."/>
            <person name="Oshima K."/>
            <person name="Kurokawa K."/>
            <person name="Yokoyama K."/>
            <person name="Uda T."/>
            <person name="Tagomori K."/>
            <person name="Iijima Y."/>
            <person name="Najima M."/>
            <person name="Nakano M."/>
            <person name="Yamashita A."/>
            <person name="Kubota Y."/>
            <person name="Kimura S."/>
            <person name="Yasunaga T."/>
            <person name="Honda T."/>
            <person name="Shinagawa H."/>
            <person name="Hattori M."/>
            <person name="Iida T."/>
        </authorList>
    </citation>
    <scope>NUCLEOTIDE SEQUENCE [LARGE SCALE GENOMIC DNA]</scope>
    <source>
        <strain>RIMD 2210633</strain>
    </source>
</reference>
<comment type="function">
    <text evidence="2">Involved in base excision repair of DNA damaged by oxidation or by mutagenic agents. Acts as a DNA glycosylase that recognizes and removes damaged bases. Has a preference for oxidized purines, such as 7,8-dihydro-8-oxoguanine (8-oxoG). Has AP (apurinic/apyrimidinic) lyase activity and introduces nicks in the DNA strand. Cleaves the DNA backbone by beta-delta elimination to generate a single-strand break at the site of the removed base with both 3'- and 5'-phosphates.</text>
</comment>
<comment type="catalytic activity">
    <reaction evidence="2">
        <text>Hydrolysis of DNA containing ring-opened 7-methylguanine residues, releasing 2,6-diamino-4-hydroxy-5-(N-methyl)formamidopyrimidine.</text>
        <dbReference type="EC" id="3.2.2.23"/>
    </reaction>
</comment>
<comment type="catalytic activity">
    <reaction evidence="2">
        <text>2'-deoxyribonucleotide-(2'-deoxyribose 5'-phosphate)-2'-deoxyribonucleotide-DNA = a 3'-end 2'-deoxyribonucleotide-(2,3-dehydro-2,3-deoxyribose 5'-phosphate)-DNA + a 5'-end 5'-phospho-2'-deoxyribonucleoside-DNA + H(+)</text>
        <dbReference type="Rhea" id="RHEA:66592"/>
        <dbReference type="Rhea" id="RHEA-COMP:13180"/>
        <dbReference type="Rhea" id="RHEA-COMP:16897"/>
        <dbReference type="Rhea" id="RHEA-COMP:17067"/>
        <dbReference type="ChEBI" id="CHEBI:15378"/>
        <dbReference type="ChEBI" id="CHEBI:136412"/>
        <dbReference type="ChEBI" id="CHEBI:157695"/>
        <dbReference type="ChEBI" id="CHEBI:167181"/>
        <dbReference type="EC" id="4.2.99.18"/>
    </reaction>
</comment>
<comment type="cofactor">
    <cofactor evidence="2">
        <name>Zn(2+)</name>
        <dbReference type="ChEBI" id="CHEBI:29105"/>
    </cofactor>
    <text evidence="2">Binds 1 zinc ion per subunit.</text>
</comment>
<comment type="subunit">
    <text evidence="2">Monomer.</text>
</comment>
<comment type="similarity">
    <text evidence="2">Belongs to the FPG family.</text>
</comment>
<protein>
    <recommendedName>
        <fullName evidence="2">Formamidopyrimidine-DNA glycosylase</fullName>
        <shortName evidence="2">Fapy-DNA glycosylase</shortName>
        <ecNumber evidence="2">3.2.2.23</ecNumber>
    </recommendedName>
    <alternativeName>
        <fullName evidence="2">DNA-(apurinic or apyrimidinic site) lyase MutM</fullName>
        <shortName evidence="2">AP lyase MutM</shortName>
        <ecNumber evidence="2">4.2.99.18</ecNumber>
    </alternativeName>
</protein>
<accession>Q87T81</accession>
<dbReference type="EC" id="3.2.2.23" evidence="2"/>
<dbReference type="EC" id="4.2.99.18" evidence="2"/>
<dbReference type="EMBL" id="BA000031">
    <property type="protein sequence ID" value="BAC58452.1"/>
    <property type="molecule type" value="Genomic_DNA"/>
</dbReference>
<dbReference type="RefSeq" id="NP_796568.1">
    <property type="nucleotide sequence ID" value="NC_004603.1"/>
</dbReference>
<dbReference type="RefSeq" id="WP_005462495.1">
    <property type="nucleotide sequence ID" value="NC_004603.1"/>
</dbReference>
<dbReference type="SMR" id="Q87T81"/>
<dbReference type="GeneID" id="1187656"/>
<dbReference type="KEGG" id="vpa:VP0189"/>
<dbReference type="PATRIC" id="fig|223926.6.peg.181"/>
<dbReference type="eggNOG" id="COG0266">
    <property type="taxonomic scope" value="Bacteria"/>
</dbReference>
<dbReference type="HOGENOM" id="CLU_038423_1_1_6"/>
<dbReference type="Proteomes" id="UP000002493">
    <property type="component" value="Chromosome 1"/>
</dbReference>
<dbReference type="GO" id="GO:0034039">
    <property type="term" value="F:8-oxo-7,8-dihydroguanine DNA N-glycosylase activity"/>
    <property type="evidence" value="ECO:0007669"/>
    <property type="project" value="TreeGrafter"/>
</dbReference>
<dbReference type="GO" id="GO:0140078">
    <property type="term" value="F:class I DNA-(apurinic or apyrimidinic site) endonuclease activity"/>
    <property type="evidence" value="ECO:0007669"/>
    <property type="project" value="UniProtKB-EC"/>
</dbReference>
<dbReference type="GO" id="GO:0003684">
    <property type="term" value="F:damaged DNA binding"/>
    <property type="evidence" value="ECO:0007669"/>
    <property type="project" value="InterPro"/>
</dbReference>
<dbReference type="GO" id="GO:0008270">
    <property type="term" value="F:zinc ion binding"/>
    <property type="evidence" value="ECO:0007669"/>
    <property type="project" value="UniProtKB-UniRule"/>
</dbReference>
<dbReference type="GO" id="GO:0006284">
    <property type="term" value="P:base-excision repair"/>
    <property type="evidence" value="ECO:0007669"/>
    <property type="project" value="InterPro"/>
</dbReference>
<dbReference type="CDD" id="cd08966">
    <property type="entry name" value="EcFpg-like_N"/>
    <property type="match status" value="1"/>
</dbReference>
<dbReference type="FunFam" id="1.10.8.50:FF:000003">
    <property type="entry name" value="Formamidopyrimidine-DNA glycosylase"/>
    <property type="match status" value="1"/>
</dbReference>
<dbReference type="FunFam" id="3.20.190.10:FF:000001">
    <property type="entry name" value="Formamidopyrimidine-DNA glycosylase"/>
    <property type="match status" value="1"/>
</dbReference>
<dbReference type="Gene3D" id="1.10.8.50">
    <property type="match status" value="1"/>
</dbReference>
<dbReference type="Gene3D" id="3.20.190.10">
    <property type="entry name" value="MutM-like, N-terminal"/>
    <property type="match status" value="1"/>
</dbReference>
<dbReference type="HAMAP" id="MF_00103">
    <property type="entry name" value="Fapy_DNA_glycosyl"/>
    <property type="match status" value="1"/>
</dbReference>
<dbReference type="InterPro" id="IPR015886">
    <property type="entry name" value="DNA_glyclase/AP_lyase_DNA-bd"/>
</dbReference>
<dbReference type="InterPro" id="IPR015887">
    <property type="entry name" value="DNA_glyclase_Znf_dom_DNA_BS"/>
</dbReference>
<dbReference type="InterPro" id="IPR020629">
    <property type="entry name" value="Formamido-pyr_DNA_Glyclase"/>
</dbReference>
<dbReference type="InterPro" id="IPR012319">
    <property type="entry name" value="FPG_cat"/>
</dbReference>
<dbReference type="InterPro" id="IPR035937">
    <property type="entry name" value="MutM-like_N-ter"/>
</dbReference>
<dbReference type="InterPro" id="IPR010979">
    <property type="entry name" value="Ribosomal_uS13-like_H2TH"/>
</dbReference>
<dbReference type="InterPro" id="IPR000214">
    <property type="entry name" value="Znf_DNA_glyclase/AP_lyase"/>
</dbReference>
<dbReference type="InterPro" id="IPR010663">
    <property type="entry name" value="Znf_FPG/IleRS"/>
</dbReference>
<dbReference type="NCBIfam" id="TIGR00577">
    <property type="entry name" value="fpg"/>
    <property type="match status" value="1"/>
</dbReference>
<dbReference type="NCBIfam" id="NF002211">
    <property type="entry name" value="PRK01103.1"/>
    <property type="match status" value="1"/>
</dbReference>
<dbReference type="PANTHER" id="PTHR22993">
    <property type="entry name" value="FORMAMIDOPYRIMIDINE-DNA GLYCOSYLASE"/>
    <property type="match status" value="1"/>
</dbReference>
<dbReference type="PANTHER" id="PTHR22993:SF9">
    <property type="entry name" value="FORMAMIDOPYRIMIDINE-DNA GLYCOSYLASE"/>
    <property type="match status" value="1"/>
</dbReference>
<dbReference type="Pfam" id="PF01149">
    <property type="entry name" value="Fapy_DNA_glyco"/>
    <property type="match status" value="1"/>
</dbReference>
<dbReference type="Pfam" id="PF06831">
    <property type="entry name" value="H2TH"/>
    <property type="match status" value="1"/>
</dbReference>
<dbReference type="Pfam" id="PF06827">
    <property type="entry name" value="zf-FPG_IleRS"/>
    <property type="match status" value="1"/>
</dbReference>
<dbReference type="SMART" id="SM00898">
    <property type="entry name" value="Fapy_DNA_glyco"/>
    <property type="match status" value="1"/>
</dbReference>
<dbReference type="SMART" id="SM01232">
    <property type="entry name" value="H2TH"/>
    <property type="match status" value="1"/>
</dbReference>
<dbReference type="SUPFAM" id="SSF57716">
    <property type="entry name" value="Glucocorticoid receptor-like (DNA-binding domain)"/>
    <property type="match status" value="1"/>
</dbReference>
<dbReference type="SUPFAM" id="SSF81624">
    <property type="entry name" value="N-terminal domain of MutM-like DNA repair proteins"/>
    <property type="match status" value="1"/>
</dbReference>
<dbReference type="SUPFAM" id="SSF46946">
    <property type="entry name" value="S13-like H2TH domain"/>
    <property type="match status" value="1"/>
</dbReference>
<dbReference type="PROSITE" id="PS51068">
    <property type="entry name" value="FPG_CAT"/>
    <property type="match status" value="1"/>
</dbReference>
<dbReference type="PROSITE" id="PS01242">
    <property type="entry name" value="ZF_FPG_1"/>
    <property type="match status" value="1"/>
</dbReference>
<dbReference type="PROSITE" id="PS51066">
    <property type="entry name" value="ZF_FPG_2"/>
    <property type="match status" value="1"/>
</dbReference>
<feature type="initiator methionine" description="Removed" evidence="1">
    <location>
        <position position="1"/>
    </location>
</feature>
<feature type="chain" id="PRO_0000170883" description="Formamidopyrimidine-DNA glycosylase">
    <location>
        <begin position="2"/>
        <end position="269"/>
    </location>
</feature>
<feature type="zinc finger region" description="FPG-type" evidence="2">
    <location>
        <begin position="235"/>
        <end position="269"/>
    </location>
</feature>
<feature type="active site" description="Schiff-base intermediate with DNA" evidence="2">
    <location>
        <position position="2"/>
    </location>
</feature>
<feature type="active site" description="Proton donor" evidence="2">
    <location>
        <position position="3"/>
    </location>
</feature>
<feature type="active site" description="Proton donor; for beta-elimination activity" evidence="2">
    <location>
        <position position="57"/>
    </location>
</feature>
<feature type="active site" description="Proton donor; for delta-elimination activity" evidence="2">
    <location>
        <position position="259"/>
    </location>
</feature>
<feature type="binding site" evidence="2">
    <location>
        <position position="90"/>
    </location>
    <ligand>
        <name>DNA</name>
        <dbReference type="ChEBI" id="CHEBI:16991"/>
    </ligand>
</feature>
<feature type="binding site" evidence="2">
    <location>
        <position position="109"/>
    </location>
    <ligand>
        <name>DNA</name>
        <dbReference type="ChEBI" id="CHEBI:16991"/>
    </ligand>
</feature>
<feature type="binding site" evidence="2">
    <location>
        <position position="150"/>
    </location>
    <ligand>
        <name>DNA</name>
        <dbReference type="ChEBI" id="CHEBI:16991"/>
    </ligand>
</feature>
<evidence type="ECO:0000250" key="1"/>
<evidence type="ECO:0000255" key="2">
    <source>
        <dbReference type="HAMAP-Rule" id="MF_00103"/>
    </source>
</evidence>
<keyword id="KW-0227">DNA damage</keyword>
<keyword id="KW-0234">DNA repair</keyword>
<keyword id="KW-0238">DNA-binding</keyword>
<keyword id="KW-0326">Glycosidase</keyword>
<keyword id="KW-0378">Hydrolase</keyword>
<keyword id="KW-0456">Lyase</keyword>
<keyword id="KW-0479">Metal-binding</keyword>
<keyword id="KW-0511">Multifunctional enzyme</keyword>
<keyword id="KW-0862">Zinc</keyword>
<keyword id="KW-0863">Zinc-finger</keyword>
<gene>
    <name evidence="2" type="primary">mutM</name>
    <name evidence="2" type="synonym">fpg</name>
    <name type="ordered locus">VP0189</name>
</gene>
<organism>
    <name type="scientific">Vibrio parahaemolyticus serotype O3:K6 (strain RIMD 2210633)</name>
    <dbReference type="NCBI Taxonomy" id="223926"/>
    <lineage>
        <taxon>Bacteria</taxon>
        <taxon>Pseudomonadati</taxon>
        <taxon>Pseudomonadota</taxon>
        <taxon>Gammaproteobacteria</taxon>
        <taxon>Vibrionales</taxon>
        <taxon>Vibrionaceae</taxon>
        <taxon>Vibrio</taxon>
    </lineage>
</organism>
<proteinExistence type="inferred from homology"/>
<name>FPG_VIBPA</name>
<sequence length="269" mass="30096">MPELPEVEVSRMGISPHMVGQTIKAFVFRTPKLRWDIPQELKLLEGQVIRNIRRRAKYLLIDTDQGTAIVHLGMSGSLRVLDADFPAAKHDHVDLKLTNGKVLRYNDPRRFGAWLWCAPGESHAVLEHMGPEPLTDAFNSEYIADKAQGKRVAVKQFIMDNKVVVGVGNIYANESLFKSRILPTRQAGQVTPQEWVLLVENIKATLKIAINQGGTTLKDFAQADGKPGYFAQELLVYGKAGEPCPECGEPLQELKIGQRNTFFCNECQQ</sequence>